<dbReference type="EMBL" id="DQ437332">
    <property type="protein sequence ID" value="ABD93327.1"/>
    <property type="status" value="ALT_INIT"/>
    <property type="molecule type" value="mRNA"/>
</dbReference>
<dbReference type="EMBL" id="AK020352">
    <property type="protein sequence ID" value="BAB32081.2"/>
    <property type="status" value="ALT_INIT"/>
    <property type="molecule type" value="mRNA"/>
</dbReference>
<dbReference type="EMBL" id="AK136616">
    <property type="protein sequence ID" value="BAE23072.1"/>
    <property type="status" value="ALT_INIT"/>
    <property type="molecule type" value="mRNA"/>
</dbReference>
<dbReference type="EMBL" id="BC145914">
    <property type="protein sequence ID" value="AAI45915.1"/>
    <property type="status" value="ALT_INIT"/>
    <property type="molecule type" value="mRNA"/>
</dbReference>
<dbReference type="EMBL" id="BC145916">
    <property type="protein sequence ID" value="AAI45917.1"/>
    <property type="status" value="ALT_INIT"/>
    <property type="molecule type" value="mRNA"/>
</dbReference>
<dbReference type="CCDS" id="CCDS29225.1"/>
<dbReference type="RefSeq" id="NP_084337.2">
    <property type="nucleotide sequence ID" value="NM_030061.4"/>
</dbReference>
<dbReference type="RefSeq" id="XP_030106492.1">
    <property type="nucleotide sequence ID" value="XM_030250632.1"/>
</dbReference>
<dbReference type="SMR" id="Q9D256"/>
<dbReference type="FunCoup" id="Q9D256">
    <property type="interactions" value="9"/>
</dbReference>
<dbReference type="STRING" id="10090.ENSMUSP00000080025"/>
<dbReference type="MEROPS" id="I01.976"/>
<dbReference type="PaxDb" id="10090-ENSMUSP00000080025"/>
<dbReference type="ProteomicsDB" id="269100"/>
<dbReference type="DNASU" id="78242"/>
<dbReference type="Ensembl" id="ENSMUST00000081271.7">
    <property type="protein sequence ID" value="ENSMUSP00000080025.7"/>
    <property type="gene ID" value="ENSMUSG00000061144.7"/>
</dbReference>
<dbReference type="GeneID" id="78242"/>
<dbReference type="KEGG" id="mmu:78242"/>
<dbReference type="UCSC" id="uc008eus.1">
    <property type="organism name" value="mouse"/>
</dbReference>
<dbReference type="AGR" id="MGI:1925492"/>
<dbReference type="CTD" id="78242"/>
<dbReference type="MGI" id="MGI:1925492">
    <property type="gene designation" value="Spink12"/>
</dbReference>
<dbReference type="VEuPathDB" id="HostDB:ENSMUSG00000061144"/>
<dbReference type="eggNOG" id="KOG3649">
    <property type="taxonomic scope" value="Eukaryota"/>
</dbReference>
<dbReference type="GeneTree" id="ENSGT00900000141664"/>
<dbReference type="InParanoid" id="Q9D256"/>
<dbReference type="OMA" id="CPKIHKP"/>
<dbReference type="OrthoDB" id="328123at2759"/>
<dbReference type="PhylomeDB" id="Q9D256"/>
<dbReference type="BioGRID-ORCS" id="78242">
    <property type="hits" value="3 hits in 77 CRISPR screens"/>
</dbReference>
<dbReference type="PRO" id="PR:Q9D256"/>
<dbReference type="Proteomes" id="UP000000589">
    <property type="component" value="Chromosome 18"/>
</dbReference>
<dbReference type="RNAct" id="Q9D256">
    <property type="molecule type" value="protein"/>
</dbReference>
<dbReference type="Bgee" id="ENSMUSG00000061144">
    <property type="expression patterns" value="Expressed in uterine cervix and 23 other cell types or tissues"/>
</dbReference>
<dbReference type="ExpressionAtlas" id="Q9D256">
    <property type="expression patterns" value="baseline and differential"/>
</dbReference>
<dbReference type="GO" id="GO:0005576">
    <property type="term" value="C:extracellular region"/>
    <property type="evidence" value="ECO:0007669"/>
    <property type="project" value="UniProtKB-SubCell"/>
</dbReference>
<dbReference type="GO" id="GO:0004867">
    <property type="term" value="F:serine-type endopeptidase inhibitor activity"/>
    <property type="evidence" value="ECO:0007669"/>
    <property type="project" value="UniProtKB-KW"/>
</dbReference>
<dbReference type="GO" id="GO:0045861">
    <property type="term" value="P:negative regulation of proteolysis"/>
    <property type="evidence" value="ECO:0000314"/>
    <property type="project" value="MGI"/>
</dbReference>
<dbReference type="CDD" id="cd01327">
    <property type="entry name" value="KAZAL_PSTI"/>
    <property type="match status" value="1"/>
</dbReference>
<dbReference type="FunFam" id="3.30.60.30:FF:000037">
    <property type="entry name" value="Ovomucoid"/>
    <property type="match status" value="1"/>
</dbReference>
<dbReference type="Gene3D" id="3.30.60.30">
    <property type="match status" value="1"/>
</dbReference>
<dbReference type="InterPro" id="IPR050159">
    <property type="entry name" value="Kazal-type_SerProtInhib"/>
</dbReference>
<dbReference type="InterPro" id="IPR002350">
    <property type="entry name" value="Kazal_dom"/>
</dbReference>
<dbReference type="InterPro" id="IPR036058">
    <property type="entry name" value="Kazal_dom_sf"/>
</dbReference>
<dbReference type="InterPro" id="IPR001239">
    <property type="entry name" value="Prot_inh_Kazal-m"/>
</dbReference>
<dbReference type="PANTHER" id="PTHR47499:SF4">
    <property type="entry name" value="SERINE PROTEASE INHIBITOR KAZAL-TYPE 12"/>
    <property type="match status" value="1"/>
</dbReference>
<dbReference type="PANTHER" id="PTHR47499">
    <property type="entry name" value="SERINE PROTEASE INHIBITOR KAZAL-TYPE 7 SPINK7"/>
    <property type="match status" value="1"/>
</dbReference>
<dbReference type="Pfam" id="PF00050">
    <property type="entry name" value="Kazal_1"/>
    <property type="match status" value="1"/>
</dbReference>
<dbReference type="PRINTS" id="PR00290">
    <property type="entry name" value="KAZALINHBTR"/>
</dbReference>
<dbReference type="SMART" id="SM00280">
    <property type="entry name" value="KAZAL"/>
    <property type="match status" value="1"/>
</dbReference>
<dbReference type="SUPFAM" id="SSF100895">
    <property type="entry name" value="Kazal-type serine protease inhibitors"/>
    <property type="match status" value="1"/>
</dbReference>
<dbReference type="PROSITE" id="PS00282">
    <property type="entry name" value="KAZAL_1"/>
    <property type="match status" value="1"/>
</dbReference>
<dbReference type="PROSITE" id="PS51465">
    <property type="entry name" value="KAZAL_2"/>
    <property type="match status" value="1"/>
</dbReference>
<feature type="signal peptide" evidence="1">
    <location>
        <begin position="1"/>
        <end position="22"/>
    </location>
</feature>
<feature type="chain" id="PRO_0000302143" description="Serine protease inhibitor Kazal-type 12">
    <location>
        <begin position="23"/>
        <end position="87"/>
    </location>
</feature>
<feature type="domain" description="Kazal-like" evidence="2">
    <location>
        <begin position="26"/>
        <end position="87"/>
    </location>
</feature>
<feature type="site" description="Reactive bond" evidence="2">
    <location>
        <begin position="48"/>
        <end position="49"/>
    </location>
</feature>
<feature type="disulfide bond" evidence="2">
    <location>
        <begin position="32"/>
        <end position="68"/>
    </location>
</feature>
<feature type="disulfide bond" evidence="2">
    <location>
        <begin position="46"/>
        <end position="65"/>
    </location>
</feature>
<feature type="disulfide bond" evidence="2">
    <location>
        <begin position="54"/>
        <end position="87"/>
    </location>
</feature>
<sequence>MKPAGAFLLLISLACLFLSVDAVSQGGFQAFCSNYEKTLAPDGKSCPKTHKPVCGTDGKTYQNRCAFCQTAMERSLGKLGFKHEGKC</sequence>
<reference key="1">
    <citation type="journal article" date="2006" name="Biochem. Biophys. Res. Commun.">
        <title>Novel epididymal protease inhibitors with Kazal or WAP family domain.</title>
        <authorList>
            <person name="Jalkanen J."/>
            <person name="Kotimaeki M."/>
            <person name="Huhtaniemi I."/>
            <person name="Poutanen M."/>
        </authorList>
    </citation>
    <scope>NUCLEOTIDE SEQUENCE [MRNA]</scope>
    <scope>FUNCTION</scope>
    <scope>TISSUE SPECIFICITY</scope>
    <source>
        <strain>FVB/N</strain>
        <tissue>Epididymis</tissue>
    </source>
</reference>
<reference key="2">
    <citation type="journal article" date="2005" name="Science">
        <title>The transcriptional landscape of the mammalian genome.</title>
        <authorList>
            <person name="Carninci P."/>
            <person name="Kasukawa T."/>
            <person name="Katayama S."/>
            <person name="Gough J."/>
            <person name="Frith M.C."/>
            <person name="Maeda N."/>
            <person name="Oyama R."/>
            <person name="Ravasi T."/>
            <person name="Lenhard B."/>
            <person name="Wells C."/>
            <person name="Kodzius R."/>
            <person name="Shimokawa K."/>
            <person name="Bajic V.B."/>
            <person name="Brenner S.E."/>
            <person name="Batalov S."/>
            <person name="Forrest A.R."/>
            <person name="Zavolan M."/>
            <person name="Davis M.J."/>
            <person name="Wilming L.G."/>
            <person name="Aidinis V."/>
            <person name="Allen J.E."/>
            <person name="Ambesi-Impiombato A."/>
            <person name="Apweiler R."/>
            <person name="Aturaliya R.N."/>
            <person name="Bailey T.L."/>
            <person name="Bansal M."/>
            <person name="Baxter L."/>
            <person name="Beisel K.W."/>
            <person name="Bersano T."/>
            <person name="Bono H."/>
            <person name="Chalk A.M."/>
            <person name="Chiu K.P."/>
            <person name="Choudhary V."/>
            <person name="Christoffels A."/>
            <person name="Clutterbuck D.R."/>
            <person name="Crowe M.L."/>
            <person name="Dalla E."/>
            <person name="Dalrymple B.P."/>
            <person name="de Bono B."/>
            <person name="Della Gatta G."/>
            <person name="di Bernardo D."/>
            <person name="Down T."/>
            <person name="Engstrom P."/>
            <person name="Fagiolini M."/>
            <person name="Faulkner G."/>
            <person name="Fletcher C.F."/>
            <person name="Fukushima T."/>
            <person name="Furuno M."/>
            <person name="Futaki S."/>
            <person name="Gariboldi M."/>
            <person name="Georgii-Hemming P."/>
            <person name="Gingeras T.R."/>
            <person name="Gojobori T."/>
            <person name="Green R.E."/>
            <person name="Gustincich S."/>
            <person name="Harbers M."/>
            <person name="Hayashi Y."/>
            <person name="Hensch T.K."/>
            <person name="Hirokawa N."/>
            <person name="Hill D."/>
            <person name="Huminiecki L."/>
            <person name="Iacono M."/>
            <person name="Ikeo K."/>
            <person name="Iwama A."/>
            <person name="Ishikawa T."/>
            <person name="Jakt M."/>
            <person name="Kanapin A."/>
            <person name="Katoh M."/>
            <person name="Kawasawa Y."/>
            <person name="Kelso J."/>
            <person name="Kitamura H."/>
            <person name="Kitano H."/>
            <person name="Kollias G."/>
            <person name="Krishnan S.P."/>
            <person name="Kruger A."/>
            <person name="Kummerfeld S.K."/>
            <person name="Kurochkin I.V."/>
            <person name="Lareau L.F."/>
            <person name="Lazarevic D."/>
            <person name="Lipovich L."/>
            <person name="Liu J."/>
            <person name="Liuni S."/>
            <person name="McWilliam S."/>
            <person name="Madan Babu M."/>
            <person name="Madera M."/>
            <person name="Marchionni L."/>
            <person name="Matsuda H."/>
            <person name="Matsuzawa S."/>
            <person name="Miki H."/>
            <person name="Mignone F."/>
            <person name="Miyake S."/>
            <person name="Morris K."/>
            <person name="Mottagui-Tabar S."/>
            <person name="Mulder N."/>
            <person name="Nakano N."/>
            <person name="Nakauchi H."/>
            <person name="Ng P."/>
            <person name="Nilsson R."/>
            <person name="Nishiguchi S."/>
            <person name="Nishikawa S."/>
            <person name="Nori F."/>
            <person name="Ohara O."/>
            <person name="Okazaki Y."/>
            <person name="Orlando V."/>
            <person name="Pang K.C."/>
            <person name="Pavan W.J."/>
            <person name="Pavesi G."/>
            <person name="Pesole G."/>
            <person name="Petrovsky N."/>
            <person name="Piazza S."/>
            <person name="Reed J."/>
            <person name="Reid J.F."/>
            <person name="Ring B.Z."/>
            <person name="Ringwald M."/>
            <person name="Rost B."/>
            <person name="Ruan Y."/>
            <person name="Salzberg S.L."/>
            <person name="Sandelin A."/>
            <person name="Schneider C."/>
            <person name="Schoenbach C."/>
            <person name="Sekiguchi K."/>
            <person name="Semple C.A."/>
            <person name="Seno S."/>
            <person name="Sessa L."/>
            <person name="Sheng Y."/>
            <person name="Shibata Y."/>
            <person name="Shimada H."/>
            <person name="Shimada K."/>
            <person name="Silva D."/>
            <person name="Sinclair B."/>
            <person name="Sperling S."/>
            <person name="Stupka E."/>
            <person name="Sugiura K."/>
            <person name="Sultana R."/>
            <person name="Takenaka Y."/>
            <person name="Taki K."/>
            <person name="Tammoja K."/>
            <person name="Tan S.L."/>
            <person name="Tang S."/>
            <person name="Taylor M.S."/>
            <person name="Tegner J."/>
            <person name="Teichmann S.A."/>
            <person name="Ueda H.R."/>
            <person name="van Nimwegen E."/>
            <person name="Verardo R."/>
            <person name="Wei C.L."/>
            <person name="Yagi K."/>
            <person name="Yamanishi H."/>
            <person name="Zabarovsky E."/>
            <person name="Zhu S."/>
            <person name="Zimmer A."/>
            <person name="Hide W."/>
            <person name="Bult C."/>
            <person name="Grimmond S.M."/>
            <person name="Teasdale R.D."/>
            <person name="Liu E.T."/>
            <person name="Brusic V."/>
            <person name="Quackenbush J."/>
            <person name="Wahlestedt C."/>
            <person name="Mattick J.S."/>
            <person name="Hume D.A."/>
            <person name="Kai C."/>
            <person name="Sasaki D."/>
            <person name="Tomaru Y."/>
            <person name="Fukuda S."/>
            <person name="Kanamori-Katayama M."/>
            <person name="Suzuki M."/>
            <person name="Aoki J."/>
            <person name="Arakawa T."/>
            <person name="Iida J."/>
            <person name="Imamura K."/>
            <person name="Itoh M."/>
            <person name="Kato T."/>
            <person name="Kawaji H."/>
            <person name="Kawagashira N."/>
            <person name="Kawashima T."/>
            <person name="Kojima M."/>
            <person name="Kondo S."/>
            <person name="Konno H."/>
            <person name="Nakano K."/>
            <person name="Ninomiya N."/>
            <person name="Nishio T."/>
            <person name="Okada M."/>
            <person name="Plessy C."/>
            <person name="Shibata K."/>
            <person name="Shiraki T."/>
            <person name="Suzuki S."/>
            <person name="Tagami M."/>
            <person name="Waki K."/>
            <person name="Watahiki A."/>
            <person name="Okamura-Oho Y."/>
            <person name="Suzuki H."/>
            <person name="Kawai J."/>
            <person name="Hayashizaki Y."/>
        </authorList>
    </citation>
    <scope>NUCLEOTIDE SEQUENCE [LARGE SCALE MRNA]</scope>
    <source>
        <strain>C57BL/6J</strain>
        <tissue>Epididymis</tissue>
    </source>
</reference>
<reference key="3">
    <citation type="journal article" date="2004" name="Genome Res.">
        <title>The status, quality, and expansion of the NIH full-length cDNA project: the Mammalian Gene Collection (MGC).</title>
        <authorList>
            <consortium name="The MGC Project Team"/>
        </authorList>
    </citation>
    <scope>NUCLEOTIDE SEQUENCE [LARGE SCALE MRNA]</scope>
    <source>
        <tissue>Brain</tissue>
    </source>
</reference>
<comment type="function">
    <text evidence="3">Inhibits trypsin.</text>
</comment>
<comment type="subcellular location">
    <subcellularLocation>
        <location evidence="4">Secreted</location>
    </subcellularLocation>
</comment>
<comment type="tissue specificity">
    <text evidence="3">Expressed in epydiymis, in the caput.</text>
</comment>
<comment type="sequence caution" evidence="4">
    <conflict type="erroneous initiation">
        <sequence resource="EMBL-CDS" id="AAI45915"/>
    </conflict>
</comment>
<comment type="sequence caution" evidence="4">
    <conflict type="erroneous initiation">
        <sequence resource="EMBL-CDS" id="AAI45917"/>
    </conflict>
</comment>
<comment type="sequence caution" evidence="4">
    <conflict type="erroneous initiation">
        <sequence resource="EMBL-CDS" id="ABD93327"/>
    </conflict>
</comment>
<comment type="sequence caution" evidence="4">
    <conflict type="erroneous initiation">
        <sequence resource="EMBL-CDS" id="BAB32081"/>
    </conflict>
</comment>
<comment type="sequence caution" evidence="4">
    <conflict type="erroneous initiation">
        <sequence resource="EMBL-CDS" id="BAE23072"/>
    </conflict>
</comment>
<protein>
    <recommendedName>
        <fullName>Serine protease inhibitor Kazal-type 12</fullName>
    </recommendedName>
</protein>
<organism>
    <name type="scientific">Mus musculus</name>
    <name type="common">Mouse</name>
    <dbReference type="NCBI Taxonomy" id="10090"/>
    <lineage>
        <taxon>Eukaryota</taxon>
        <taxon>Metazoa</taxon>
        <taxon>Chordata</taxon>
        <taxon>Craniata</taxon>
        <taxon>Vertebrata</taxon>
        <taxon>Euteleostomi</taxon>
        <taxon>Mammalia</taxon>
        <taxon>Eutheria</taxon>
        <taxon>Euarchontoglires</taxon>
        <taxon>Glires</taxon>
        <taxon>Rodentia</taxon>
        <taxon>Myomorpha</taxon>
        <taxon>Muroidea</taxon>
        <taxon>Muridae</taxon>
        <taxon>Murinae</taxon>
        <taxon>Mus</taxon>
        <taxon>Mus</taxon>
    </lineage>
</organism>
<gene>
    <name type="primary">Spink12</name>
</gene>
<evidence type="ECO:0000255" key="1"/>
<evidence type="ECO:0000255" key="2">
    <source>
        <dbReference type="PROSITE-ProRule" id="PRU00798"/>
    </source>
</evidence>
<evidence type="ECO:0000269" key="3">
    <source>
    </source>
</evidence>
<evidence type="ECO:0000305" key="4"/>
<accession>Q9D256</accession>
<name>ISK12_MOUSE</name>
<proteinExistence type="evidence at transcript level"/>
<keyword id="KW-1015">Disulfide bond</keyword>
<keyword id="KW-0646">Protease inhibitor</keyword>
<keyword id="KW-1185">Reference proteome</keyword>
<keyword id="KW-0964">Secreted</keyword>
<keyword id="KW-0722">Serine protease inhibitor</keyword>
<keyword id="KW-0732">Signal</keyword>